<accession>B6EGJ0</accession>
<keyword id="KW-0949">S-adenosyl-L-methionine</keyword>
<keyword id="KW-0808">Transferase</keyword>
<comment type="function">
    <text evidence="1">Catalyzes the conversion of S-adenosyl-L-methionine (SAM) to carboxy-S-adenosyl-L-methionine (Cx-SAM).</text>
</comment>
<comment type="catalytic activity">
    <reaction evidence="1">
        <text>prephenate + S-adenosyl-L-methionine = carboxy-S-adenosyl-L-methionine + 3-phenylpyruvate + H2O</text>
        <dbReference type="Rhea" id="RHEA:51692"/>
        <dbReference type="ChEBI" id="CHEBI:15377"/>
        <dbReference type="ChEBI" id="CHEBI:18005"/>
        <dbReference type="ChEBI" id="CHEBI:29934"/>
        <dbReference type="ChEBI" id="CHEBI:59789"/>
        <dbReference type="ChEBI" id="CHEBI:134278"/>
    </reaction>
</comment>
<comment type="subunit">
    <text evidence="1">Homodimer.</text>
</comment>
<comment type="similarity">
    <text evidence="1">Belongs to the class I-like SAM-binding methyltransferase superfamily. Cx-SAM synthase family.</text>
</comment>
<proteinExistence type="inferred from homology"/>
<protein>
    <recommendedName>
        <fullName evidence="1">Carboxy-S-adenosyl-L-methionine synthase</fullName>
        <shortName evidence="1">Cx-SAM synthase</shortName>
        <ecNumber evidence="1">2.1.3.-</ecNumber>
    </recommendedName>
</protein>
<evidence type="ECO:0000255" key="1">
    <source>
        <dbReference type="HAMAP-Rule" id="MF_01589"/>
    </source>
</evidence>
<name>CMOA_ALISL</name>
<reference key="1">
    <citation type="journal article" date="2008" name="BMC Genomics">
        <title>The genome sequence of the fish pathogen Aliivibrio salmonicida strain LFI1238 shows extensive evidence of gene decay.</title>
        <authorList>
            <person name="Hjerde E."/>
            <person name="Lorentzen M.S."/>
            <person name="Holden M.T."/>
            <person name="Seeger K."/>
            <person name="Paulsen S."/>
            <person name="Bason N."/>
            <person name="Churcher C."/>
            <person name="Harris D."/>
            <person name="Norbertczak H."/>
            <person name="Quail M.A."/>
            <person name="Sanders S."/>
            <person name="Thurston S."/>
            <person name="Parkhill J."/>
            <person name="Willassen N.P."/>
            <person name="Thomson N.R."/>
        </authorList>
    </citation>
    <scope>NUCLEOTIDE SEQUENCE [LARGE SCALE GENOMIC DNA]</scope>
    <source>
        <strain>LFI1238</strain>
    </source>
</reference>
<gene>
    <name evidence="1" type="primary">cmoA</name>
    <name type="ordered locus">VSAL_I1885</name>
</gene>
<dbReference type="EC" id="2.1.3.-" evidence="1"/>
<dbReference type="EMBL" id="FM178379">
    <property type="protein sequence ID" value="CAQ79570.1"/>
    <property type="molecule type" value="Genomic_DNA"/>
</dbReference>
<dbReference type="RefSeq" id="WP_012550460.1">
    <property type="nucleotide sequence ID" value="NC_011312.1"/>
</dbReference>
<dbReference type="SMR" id="B6EGJ0"/>
<dbReference type="KEGG" id="vsa:VSAL_I1885"/>
<dbReference type="eggNOG" id="COG4106">
    <property type="taxonomic scope" value="Bacteria"/>
</dbReference>
<dbReference type="HOGENOM" id="CLU_078475_0_0_6"/>
<dbReference type="Proteomes" id="UP000001730">
    <property type="component" value="Chromosome 1"/>
</dbReference>
<dbReference type="GO" id="GO:0016743">
    <property type="term" value="F:carboxyl- or carbamoyltransferase activity"/>
    <property type="evidence" value="ECO:0007669"/>
    <property type="project" value="UniProtKB-UniRule"/>
</dbReference>
<dbReference type="GO" id="GO:1904047">
    <property type="term" value="F:S-adenosyl-L-methionine binding"/>
    <property type="evidence" value="ECO:0007669"/>
    <property type="project" value="UniProtKB-UniRule"/>
</dbReference>
<dbReference type="GO" id="GO:0002098">
    <property type="term" value="P:tRNA wobble uridine modification"/>
    <property type="evidence" value="ECO:0007669"/>
    <property type="project" value="InterPro"/>
</dbReference>
<dbReference type="CDD" id="cd02440">
    <property type="entry name" value="AdoMet_MTases"/>
    <property type="match status" value="1"/>
</dbReference>
<dbReference type="Gene3D" id="3.40.50.150">
    <property type="entry name" value="Vaccinia Virus protein VP39"/>
    <property type="match status" value="1"/>
</dbReference>
<dbReference type="HAMAP" id="MF_01589">
    <property type="entry name" value="Cx_SAM_synthase"/>
    <property type="match status" value="1"/>
</dbReference>
<dbReference type="InterPro" id="IPR005271">
    <property type="entry name" value="CmoA"/>
</dbReference>
<dbReference type="InterPro" id="IPR041698">
    <property type="entry name" value="Methyltransf_25"/>
</dbReference>
<dbReference type="InterPro" id="IPR029063">
    <property type="entry name" value="SAM-dependent_MTases_sf"/>
</dbReference>
<dbReference type="NCBIfam" id="TIGR00740">
    <property type="entry name" value="carboxy-S-adenosyl-L-methionine synthase CmoA"/>
    <property type="match status" value="1"/>
</dbReference>
<dbReference type="NCBIfam" id="NF011995">
    <property type="entry name" value="PRK15451.1"/>
    <property type="match status" value="1"/>
</dbReference>
<dbReference type="PANTHER" id="PTHR43861:SF2">
    <property type="entry name" value="CARBOXY-S-ADENOSYL-L-METHIONINE SYNTHASE"/>
    <property type="match status" value="1"/>
</dbReference>
<dbReference type="PANTHER" id="PTHR43861">
    <property type="entry name" value="TRANS-ACONITATE 2-METHYLTRANSFERASE-RELATED"/>
    <property type="match status" value="1"/>
</dbReference>
<dbReference type="Pfam" id="PF13649">
    <property type="entry name" value="Methyltransf_25"/>
    <property type="match status" value="1"/>
</dbReference>
<dbReference type="PIRSF" id="PIRSF006325">
    <property type="entry name" value="MeTrfase_bac"/>
    <property type="match status" value="1"/>
</dbReference>
<dbReference type="SUPFAM" id="SSF53335">
    <property type="entry name" value="S-adenosyl-L-methionine-dependent methyltransferases"/>
    <property type="match status" value="1"/>
</dbReference>
<sequence>MANPDTIFSAPIDKIGDFTFDERVAEVFPDMIQRSIPGYSNIISAIGMLAERYAKPHSSVYDLGCSLGAATLSMRRHINQEGCQIIGVDNSSAMVERCRLLINAYRSDTPVTIVEADIRDVNIQDASVVVLNFTLQFLVPADRRALLEKIYSGLRPGGILILSEKYIFEDGVVNELLIDLHHDFKRANGYSELEISQKRSAIENVMLPDPIDVHKQRFQEIGFKSSEVWFQCFNFGSMFAIK</sequence>
<feature type="chain" id="PRO_1000201343" description="Carboxy-S-adenosyl-L-methionine synthase">
    <location>
        <begin position="1"/>
        <end position="242"/>
    </location>
</feature>
<feature type="binding site" evidence="1">
    <location>
        <position position="39"/>
    </location>
    <ligand>
        <name>S-adenosyl-L-methionine</name>
        <dbReference type="ChEBI" id="CHEBI:59789"/>
    </ligand>
</feature>
<feature type="binding site" evidence="1">
    <location>
        <begin position="64"/>
        <end position="66"/>
    </location>
    <ligand>
        <name>S-adenosyl-L-methionine</name>
        <dbReference type="ChEBI" id="CHEBI:59789"/>
    </ligand>
</feature>
<feature type="binding site" evidence="1">
    <location>
        <begin position="89"/>
        <end position="90"/>
    </location>
    <ligand>
        <name>S-adenosyl-L-methionine</name>
        <dbReference type="ChEBI" id="CHEBI:59789"/>
    </ligand>
</feature>
<feature type="binding site" evidence="1">
    <location>
        <begin position="117"/>
        <end position="118"/>
    </location>
    <ligand>
        <name>S-adenosyl-L-methionine</name>
        <dbReference type="ChEBI" id="CHEBI:59789"/>
    </ligand>
</feature>
<feature type="binding site" evidence="1">
    <location>
        <position position="132"/>
    </location>
    <ligand>
        <name>S-adenosyl-L-methionine</name>
        <dbReference type="ChEBI" id="CHEBI:59789"/>
    </ligand>
</feature>
<feature type="binding site" evidence="1">
    <location>
        <position position="199"/>
    </location>
    <ligand>
        <name>S-adenosyl-L-methionine</name>
        <dbReference type="ChEBI" id="CHEBI:59789"/>
    </ligand>
</feature>
<organism>
    <name type="scientific">Aliivibrio salmonicida (strain LFI1238)</name>
    <name type="common">Vibrio salmonicida (strain LFI1238)</name>
    <dbReference type="NCBI Taxonomy" id="316275"/>
    <lineage>
        <taxon>Bacteria</taxon>
        <taxon>Pseudomonadati</taxon>
        <taxon>Pseudomonadota</taxon>
        <taxon>Gammaproteobacteria</taxon>
        <taxon>Vibrionales</taxon>
        <taxon>Vibrionaceae</taxon>
        <taxon>Aliivibrio</taxon>
    </lineage>
</organism>